<dbReference type="EMBL" id="AP002409">
    <property type="status" value="NOT_ANNOTATED_CDS"/>
    <property type="molecule type" value="Genomic_DNA"/>
</dbReference>
<dbReference type="EMBL" id="AP005062">
    <property type="status" value="NOT_ANNOTATED_CDS"/>
    <property type="molecule type" value="Genomic_DNA"/>
</dbReference>
<dbReference type="EMBL" id="AP005210">
    <property type="status" value="NOT_ANNOTATED_CDS"/>
    <property type="molecule type" value="Genomic_DNA"/>
</dbReference>
<dbReference type="EMBL" id="X58531">
    <property type="protein sequence ID" value="CAA41418.1"/>
    <property type="molecule type" value="mRNA"/>
</dbReference>
<dbReference type="CCDS" id="CCDS32787.1"/>
<dbReference type="PIR" id="S14458">
    <property type="entry name" value="S14458"/>
</dbReference>
<dbReference type="RefSeq" id="NP_005550.2">
    <property type="nucleotide sequence ID" value="NM_005559.3"/>
</dbReference>
<dbReference type="SMR" id="P25391"/>
<dbReference type="BioGRID" id="129792">
    <property type="interactions" value="62"/>
</dbReference>
<dbReference type="ComplexPortal" id="CPX-1770">
    <property type="entry name" value="Laminin-111 complex"/>
</dbReference>
<dbReference type="ComplexPortal" id="CPX-1772">
    <property type="entry name" value="Laminin-121 complex"/>
</dbReference>
<dbReference type="DIP" id="DIP-29324N"/>
<dbReference type="FunCoup" id="P25391">
    <property type="interactions" value="1075"/>
</dbReference>
<dbReference type="IntAct" id="P25391">
    <property type="interactions" value="49"/>
</dbReference>
<dbReference type="MINT" id="P25391"/>
<dbReference type="STRING" id="9606.ENSP00000374309"/>
<dbReference type="ChEMBL" id="CHEMBL4523594"/>
<dbReference type="DrugBank" id="DB06245">
    <property type="generic name" value="Lanoteplase"/>
</dbReference>
<dbReference type="GlyConnect" id="1438">
    <property type="glycosylation" value="11 N-Linked glycans (1 site)"/>
</dbReference>
<dbReference type="GlyCosmos" id="P25391">
    <property type="glycosylation" value="7 sites, 11 glycans"/>
</dbReference>
<dbReference type="GlyGen" id="P25391">
    <property type="glycosylation" value="25 sites, 73 N-linked glycans (19 sites), 1 O-linked glycan (1 site)"/>
</dbReference>
<dbReference type="iPTMnet" id="P25391"/>
<dbReference type="PhosphoSitePlus" id="P25391"/>
<dbReference type="BioMuta" id="LAMA1"/>
<dbReference type="DMDM" id="281185471"/>
<dbReference type="jPOST" id="P25391"/>
<dbReference type="MassIVE" id="P25391"/>
<dbReference type="PaxDb" id="9606-ENSP00000374309"/>
<dbReference type="PeptideAtlas" id="P25391"/>
<dbReference type="ProteomicsDB" id="54269"/>
<dbReference type="Pumba" id="P25391"/>
<dbReference type="Antibodypedia" id="4123">
    <property type="antibodies" value="333 antibodies from 30 providers"/>
</dbReference>
<dbReference type="DNASU" id="284217"/>
<dbReference type="Ensembl" id="ENST00000389658.4">
    <property type="protein sequence ID" value="ENSP00000374309.3"/>
    <property type="gene ID" value="ENSG00000101680.16"/>
</dbReference>
<dbReference type="GeneID" id="284217"/>
<dbReference type="KEGG" id="hsa:284217"/>
<dbReference type="MANE-Select" id="ENST00000389658.4">
    <property type="protein sequence ID" value="ENSP00000374309.3"/>
    <property type="RefSeq nucleotide sequence ID" value="NM_005559.4"/>
    <property type="RefSeq protein sequence ID" value="NP_005550.2"/>
</dbReference>
<dbReference type="UCSC" id="uc002knm.3">
    <property type="organism name" value="human"/>
</dbReference>
<dbReference type="AGR" id="HGNC:6481"/>
<dbReference type="CTD" id="284217"/>
<dbReference type="DisGeNET" id="284217"/>
<dbReference type="GeneCards" id="LAMA1"/>
<dbReference type="HGNC" id="HGNC:6481">
    <property type="gene designation" value="LAMA1"/>
</dbReference>
<dbReference type="HPA" id="ENSG00000101680">
    <property type="expression patterns" value="Tissue enhanced (ovary, testis)"/>
</dbReference>
<dbReference type="MalaCards" id="LAMA1"/>
<dbReference type="MIM" id="150320">
    <property type="type" value="gene"/>
</dbReference>
<dbReference type="MIM" id="615960">
    <property type="type" value="phenotype"/>
</dbReference>
<dbReference type="neXtProt" id="NX_P25391"/>
<dbReference type="OpenTargets" id="ENSG00000101680"/>
<dbReference type="Orphanet" id="370022">
    <property type="disease" value="Ataxia-intellectual disability-oculomotor apraxia-cerebellar cysts syndrome"/>
</dbReference>
<dbReference type="PharmGKB" id="PA30270"/>
<dbReference type="VEuPathDB" id="HostDB:ENSG00000101680"/>
<dbReference type="eggNOG" id="KOG1836">
    <property type="taxonomic scope" value="Eukaryota"/>
</dbReference>
<dbReference type="GeneTree" id="ENSGT00940000157124"/>
<dbReference type="HOGENOM" id="CLU_000301_0_0_1"/>
<dbReference type="InParanoid" id="P25391"/>
<dbReference type="OMA" id="TVRQHVH"/>
<dbReference type="OrthoDB" id="10011303at2759"/>
<dbReference type="PAN-GO" id="P25391">
    <property type="GO annotations" value="7 GO annotations based on evolutionary models"/>
</dbReference>
<dbReference type="PhylomeDB" id="P25391"/>
<dbReference type="TreeFam" id="TF335359"/>
<dbReference type="PathwayCommons" id="P25391"/>
<dbReference type="Reactome" id="R-HSA-3000157">
    <property type="pathway name" value="Laminin interactions"/>
</dbReference>
<dbReference type="Reactome" id="R-HSA-3000171">
    <property type="pathway name" value="Non-integrin membrane-ECM interactions"/>
</dbReference>
<dbReference type="Reactome" id="R-HSA-3000178">
    <property type="pathway name" value="ECM proteoglycans"/>
</dbReference>
<dbReference type="Reactome" id="R-HSA-373760">
    <property type="pathway name" value="L1CAM interactions"/>
</dbReference>
<dbReference type="Reactome" id="R-HSA-8874081">
    <property type="pathway name" value="MET activates PTK2 signaling"/>
</dbReference>
<dbReference type="Reactome" id="R-HSA-9913351">
    <property type="pathway name" value="Formation of the dystrophin-glycoprotein complex (DGC)"/>
</dbReference>
<dbReference type="SignaLink" id="P25391"/>
<dbReference type="SIGNOR" id="P25391"/>
<dbReference type="BioGRID-ORCS" id="284217">
    <property type="hits" value="11 hits in 1148 CRISPR screens"/>
</dbReference>
<dbReference type="ChiTaRS" id="LAMA1">
    <property type="organism name" value="human"/>
</dbReference>
<dbReference type="GeneWiki" id="Laminin,_alpha_1"/>
<dbReference type="GenomeRNAi" id="284217"/>
<dbReference type="Pharos" id="P25391">
    <property type="development level" value="Tbio"/>
</dbReference>
<dbReference type="PRO" id="PR:P25391"/>
<dbReference type="Proteomes" id="UP000005640">
    <property type="component" value="Chromosome 18"/>
</dbReference>
<dbReference type="RNAct" id="P25391">
    <property type="molecule type" value="protein"/>
</dbReference>
<dbReference type="Bgee" id="ENSG00000101680">
    <property type="expression patterns" value="Expressed in ventricular zone and 106 other cell types or tissues"/>
</dbReference>
<dbReference type="ExpressionAtlas" id="P25391">
    <property type="expression patterns" value="baseline and differential"/>
</dbReference>
<dbReference type="GO" id="GO:0005604">
    <property type="term" value="C:basement membrane"/>
    <property type="evidence" value="ECO:0000314"/>
    <property type="project" value="UniProtKB"/>
</dbReference>
<dbReference type="GO" id="GO:0005911">
    <property type="term" value="C:cell-cell junction"/>
    <property type="evidence" value="ECO:0007669"/>
    <property type="project" value="Ensembl"/>
</dbReference>
<dbReference type="GO" id="GO:0062023">
    <property type="term" value="C:collagen-containing extracellular matrix"/>
    <property type="evidence" value="ECO:0007005"/>
    <property type="project" value="UniProtKB"/>
</dbReference>
<dbReference type="GO" id="GO:0031012">
    <property type="term" value="C:extracellular matrix"/>
    <property type="evidence" value="ECO:0000250"/>
    <property type="project" value="UniProtKB"/>
</dbReference>
<dbReference type="GO" id="GO:0005576">
    <property type="term" value="C:extracellular region"/>
    <property type="evidence" value="ECO:0000304"/>
    <property type="project" value="Reactome"/>
</dbReference>
<dbReference type="GO" id="GO:0005615">
    <property type="term" value="C:extracellular space"/>
    <property type="evidence" value="ECO:0000314"/>
    <property type="project" value="UniProtKB"/>
</dbReference>
<dbReference type="GO" id="GO:0005606">
    <property type="term" value="C:laminin-1 complex"/>
    <property type="evidence" value="ECO:0000314"/>
    <property type="project" value="UniProtKB"/>
</dbReference>
<dbReference type="GO" id="GO:0005608">
    <property type="term" value="C:laminin-3 complex"/>
    <property type="evidence" value="ECO:0000353"/>
    <property type="project" value="UniProtKB"/>
</dbReference>
<dbReference type="GO" id="GO:0016020">
    <property type="term" value="C:membrane"/>
    <property type="evidence" value="ECO:0000314"/>
    <property type="project" value="CAFA"/>
</dbReference>
<dbReference type="GO" id="GO:0098637">
    <property type="term" value="C:protein complex involved in cell-matrix adhesion"/>
    <property type="evidence" value="ECO:0000303"/>
    <property type="project" value="ComplexPortal"/>
</dbReference>
<dbReference type="GO" id="GO:0005201">
    <property type="term" value="F:extracellular matrix structural constituent"/>
    <property type="evidence" value="ECO:0000250"/>
    <property type="project" value="UniProtKB"/>
</dbReference>
<dbReference type="GO" id="GO:0043208">
    <property type="term" value="F:glycosphingolipid binding"/>
    <property type="evidence" value="ECO:0007669"/>
    <property type="project" value="Ensembl"/>
</dbReference>
<dbReference type="GO" id="GO:0005102">
    <property type="term" value="F:signaling receptor binding"/>
    <property type="evidence" value="ECO:0007669"/>
    <property type="project" value="InterPro"/>
</dbReference>
<dbReference type="GO" id="GO:0060445">
    <property type="term" value="P:branching involved in salivary gland morphogenesis"/>
    <property type="evidence" value="ECO:0007669"/>
    <property type="project" value="Ensembl"/>
</dbReference>
<dbReference type="GO" id="GO:0007155">
    <property type="term" value="P:cell adhesion"/>
    <property type="evidence" value="ECO:0007669"/>
    <property type="project" value="UniProtKB-KW"/>
</dbReference>
<dbReference type="GO" id="GO:0007166">
    <property type="term" value="P:cell surface receptor signaling pathway"/>
    <property type="evidence" value="ECO:0000250"/>
    <property type="project" value="UniProtKB"/>
</dbReference>
<dbReference type="GO" id="GO:0060441">
    <property type="term" value="P:epithelial tube branching involved in lung morphogenesis"/>
    <property type="evidence" value="ECO:0007669"/>
    <property type="project" value="Ensembl"/>
</dbReference>
<dbReference type="GO" id="GO:0045198">
    <property type="term" value="P:establishment of epithelial cell apical/basal polarity"/>
    <property type="evidence" value="ECO:0007669"/>
    <property type="project" value="Ensembl"/>
</dbReference>
<dbReference type="GO" id="GO:0002011">
    <property type="term" value="P:morphogenesis of an epithelial sheet"/>
    <property type="evidence" value="ECO:0007669"/>
    <property type="project" value="Ensembl"/>
</dbReference>
<dbReference type="GO" id="GO:0031175">
    <property type="term" value="P:neuron projection development"/>
    <property type="evidence" value="ECO:0007669"/>
    <property type="project" value="Ensembl"/>
</dbReference>
<dbReference type="GO" id="GO:0045785">
    <property type="term" value="P:positive regulation of cell adhesion"/>
    <property type="evidence" value="ECO:0000303"/>
    <property type="project" value="ComplexPortal"/>
</dbReference>
<dbReference type="GO" id="GO:2001046">
    <property type="term" value="P:positive regulation of integrin-mediated signaling pathway"/>
    <property type="evidence" value="ECO:0000303"/>
    <property type="project" value="ComplexPortal"/>
</dbReference>
<dbReference type="GO" id="GO:0051149">
    <property type="term" value="P:positive regulation of muscle cell differentiation"/>
    <property type="evidence" value="ECO:0000303"/>
    <property type="project" value="ComplexPortal"/>
</dbReference>
<dbReference type="GO" id="GO:0110011">
    <property type="term" value="P:regulation of basement membrane organization"/>
    <property type="evidence" value="ECO:0000303"/>
    <property type="project" value="ComplexPortal"/>
</dbReference>
<dbReference type="GO" id="GO:0030334">
    <property type="term" value="P:regulation of cell migration"/>
    <property type="evidence" value="ECO:0007669"/>
    <property type="project" value="InterPro"/>
</dbReference>
<dbReference type="GO" id="GO:0045995">
    <property type="term" value="P:regulation of embryonic development"/>
    <property type="evidence" value="ECO:0007669"/>
    <property type="project" value="InterPro"/>
</dbReference>
<dbReference type="GO" id="GO:0061304">
    <property type="term" value="P:retinal blood vessel morphogenesis"/>
    <property type="evidence" value="ECO:0007669"/>
    <property type="project" value="Ensembl"/>
</dbReference>
<dbReference type="CDD" id="cd00055">
    <property type="entry name" value="EGF_Lam"/>
    <property type="match status" value="14"/>
</dbReference>
<dbReference type="CDD" id="cd00110">
    <property type="entry name" value="LamG"/>
    <property type="match status" value="5"/>
</dbReference>
<dbReference type="FunFam" id="2.10.25.10:FF:000074">
    <property type="entry name" value="Laminin subunit alpha"/>
    <property type="match status" value="1"/>
</dbReference>
<dbReference type="FunFam" id="2.10.25.10:FF:000069">
    <property type="entry name" value="Laminin subunit alpha 1"/>
    <property type="match status" value="1"/>
</dbReference>
<dbReference type="FunFam" id="2.10.25.10:FF:000082">
    <property type="entry name" value="Laminin subunit alpha 1"/>
    <property type="match status" value="2"/>
</dbReference>
<dbReference type="FunFam" id="2.10.25.10:FF:000242">
    <property type="entry name" value="Laminin subunit alpha 1"/>
    <property type="match status" value="1"/>
</dbReference>
<dbReference type="FunFam" id="2.10.25.10:FF:000454">
    <property type="entry name" value="Laminin subunit alpha 1"/>
    <property type="match status" value="1"/>
</dbReference>
<dbReference type="FunFam" id="2.10.25.10:FF:000512">
    <property type="entry name" value="Laminin subunit alpha 1"/>
    <property type="match status" value="1"/>
</dbReference>
<dbReference type="FunFam" id="2.10.25.10:FF:000629">
    <property type="entry name" value="Laminin subunit alpha 1"/>
    <property type="match status" value="1"/>
</dbReference>
<dbReference type="FunFam" id="2.60.120.200:FF:000098">
    <property type="entry name" value="Laminin subunit alpha 1"/>
    <property type="match status" value="1"/>
</dbReference>
<dbReference type="FunFam" id="2.60.120.200:FF:000116">
    <property type="entry name" value="Laminin subunit alpha 1"/>
    <property type="match status" value="1"/>
</dbReference>
<dbReference type="FunFam" id="2.60.120.200:FF:000119">
    <property type="entry name" value="Laminin subunit alpha 1"/>
    <property type="match status" value="1"/>
</dbReference>
<dbReference type="FunFam" id="2.60.120.200:FF:000127">
    <property type="entry name" value="Laminin subunit alpha 1"/>
    <property type="match status" value="1"/>
</dbReference>
<dbReference type="FunFam" id="2.60.120.200:FF:000161">
    <property type="entry name" value="Laminin subunit alpha 1"/>
    <property type="match status" value="1"/>
</dbReference>
<dbReference type="FunFam" id="2.10.25.10:FF:000189">
    <property type="entry name" value="Laminin subunit alpha 2"/>
    <property type="match status" value="1"/>
</dbReference>
<dbReference type="FunFam" id="2.10.25.10:FF:000250">
    <property type="entry name" value="Laminin subunit alpha 2"/>
    <property type="match status" value="1"/>
</dbReference>
<dbReference type="FunFam" id="2.170.300.10:FF:000008">
    <property type="entry name" value="Laminin subunit alpha 2"/>
    <property type="match status" value="1"/>
</dbReference>
<dbReference type="FunFam" id="2.60.120.260:FF:000017">
    <property type="entry name" value="Laminin subunit alpha 2"/>
    <property type="match status" value="1"/>
</dbReference>
<dbReference type="FunFam" id="2.10.25.10:FF:000051">
    <property type="entry name" value="Laminin subunit alpha 4"/>
    <property type="match status" value="1"/>
</dbReference>
<dbReference type="FunFam" id="2.10.25.10:FF:000094">
    <property type="entry name" value="Laminin subunit alpha-2"/>
    <property type="match status" value="1"/>
</dbReference>
<dbReference type="FunFam" id="2.10.25.10:FF:000128">
    <property type="entry name" value="laminin subunit alpha-2 isoform X1"/>
    <property type="match status" value="2"/>
</dbReference>
<dbReference type="FunFam" id="2.170.300.10:FF:000026">
    <property type="entry name" value="laminin subunit alpha-2 isoform X2"/>
    <property type="match status" value="1"/>
</dbReference>
<dbReference type="FunFam" id="2.10.25.10:FF:000065">
    <property type="entry name" value="Laminin subunit beta 1"/>
    <property type="match status" value="1"/>
</dbReference>
<dbReference type="Gene3D" id="2.60.120.200">
    <property type="match status" value="5"/>
</dbReference>
<dbReference type="Gene3D" id="2.60.120.260">
    <property type="entry name" value="Galactose-binding domain-like"/>
    <property type="match status" value="1"/>
</dbReference>
<dbReference type="Gene3D" id="2.10.25.10">
    <property type="entry name" value="Laminin"/>
    <property type="match status" value="14"/>
</dbReference>
<dbReference type="Gene3D" id="2.170.300.10">
    <property type="entry name" value="Tie2 ligand-binding domain superfamily"/>
    <property type="match status" value="1"/>
</dbReference>
<dbReference type="InterPro" id="IPR013320">
    <property type="entry name" value="ConA-like_dom_sf"/>
</dbReference>
<dbReference type="InterPro" id="IPR000742">
    <property type="entry name" value="EGF-like_dom"/>
</dbReference>
<dbReference type="InterPro" id="IPR050440">
    <property type="entry name" value="Laminin/Netrin_ECM"/>
</dbReference>
<dbReference type="InterPro" id="IPR009254">
    <property type="entry name" value="Laminin_aI"/>
</dbReference>
<dbReference type="InterPro" id="IPR010307">
    <property type="entry name" value="Laminin_dom_II"/>
</dbReference>
<dbReference type="InterPro" id="IPR001791">
    <property type="entry name" value="Laminin_G"/>
</dbReference>
<dbReference type="InterPro" id="IPR000034">
    <property type="entry name" value="Laminin_IV"/>
</dbReference>
<dbReference type="InterPro" id="IPR008211">
    <property type="entry name" value="Laminin_N"/>
</dbReference>
<dbReference type="InterPro" id="IPR002049">
    <property type="entry name" value="LE_dom"/>
</dbReference>
<dbReference type="InterPro" id="IPR056863">
    <property type="entry name" value="LMN_ATRN_NET-like_EGF"/>
</dbReference>
<dbReference type="PANTHER" id="PTHR10574:SF409">
    <property type="entry name" value="LAMININ SUBUNIT ALPHA-1"/>
    <property type="match status" value="1"/>
</dbReference>
<dbReference type="PANTHER" id="PTHR10574">
    <property type="entry name" value="NETRIN/LAMININ-RELATED"/>
    <property type="match status" value="1"/>
</dbReference>
<dbReference type="Pfam" id="PF00053">
    <property type="entry name" value="EGF_laminin"/>
    <property type="match status" value="15"/>
</dbReference>
<dbReference type="Pfam" id="PF24973">
    <property type="entry name" value="EGF_LMN_ATRN"/>
    <property type="match status" value="2"/>
</dbReference>
<dbReference type="Pfam" id="PF00052">
    <property type="entry name" value="Laminin_B"/>
    <property type="match status" value="2"/>
</dbReference>
<dbReference type="Pfam" id="PF00054">
    <property type="entry name" value="Laminin_G_1"/>
    <property type="match status" value="5"/>
</dbReference>
<dbReference type="Pfam" id="PF06008">
    <property type="entry name" value="Laminin_I"/>
    <property type="match status" value="1"/>
</dbReference>
<dbReference type="Pfam" id="PF06009">
    <property type="entry name" value="Laminin_II"/>
    <property type="match status" value="1"/>
</dbReference>
<dbReference type="Pfam" id="PF00055">
    <property type="entry name" value="Laminin_N"/>
    <property type="match status" value="1"/>
</dbReference>
<dbReference type="PRINTS" id="PR00011">
    <property type="entry name" value="EGFLAMININ"/>
</dbReference>
<dbReference type="SMART" id="SM00181">
    <property type="entry name" value="EGF"/>
    <property type="match status" value="12"/>
</dbReference>
<dbReference type="SMART" id="SM00180">
    <property type="entry name" value="EGF_Lam"/>
    <property type="match status" value="17"/>
</dbReference>
<dbReference type="SMART" id="SM00281">
    <property type="entry name" value="LamB"/>
    <property type="match status" value="2"/>
</dbReference>
<dbReference type="SMART" id="SM00282">
    <property type="entry name" value="LamG"/>
    <property type="match status" value="5"/>
</dbReference>
<dbReference type="SMART" id="SM00136">
    <property type="entry name" value="LamNT"/>
    <property type="match status" value="1"/>
</dbReference>
<dbReference type="SUPFAM" id="SSF49899">
    <property type="entry name" value="Concanavalin A-like lectins/glucanases"/>
    <property type="match status" value="5"/>
</dbReference>
<dbReference type="SUPFAM" id="SSF57196">
    <property type="entry name" value="EGF/Laminin"/>
    <property type="match status" value="15"/>
</dbReference>
<dbReference type="PROSITE" id="PS00022">
    <property type="entry name" value="EGF_1"/>
    <property type="match status" value="11"/>
</dbReference>
<dbReference type="PROSITE" id="PS01186">
    <property type="entry name" value="EGF_2"/>
    <property type="match status" value="2"/>
</dbReference>
<dbReference type="PROSITE" id="PS01248">
    <property type="entry name" value="EGF_LAM_1"/>
    <property type="match status" value="15"/>
</dbReference>
<dbReference type="PROSITE" id="PS50027">
    <property type="entry name" value="EGF_LAM_2"/>
    <property type="match status" value="15"/>
</dbReference>
<dbReference type="PROSITE" id="PS50025">
    <property type="entry name" value="LAM_G_DOMAIN"/>
    <property type="match status" value="5"/>
</dbReference>
<dbReference type="PROSITE" id="PS51115">
    <property type="entry name" value="LAMININ_IVA"/>
    <property type="match status" value="2"/>
</dbReference>
<dbReference type="PROSITE" id="PS51117">
    <property type="entry name" value="LAMININ_NTER"/>
    <property type="match status" value="1"/>
</dbReference>
<keyword id="KW-0084">Basement membrane</keyword>
<keyword id="KW-0130">Cell adhesion</keyword>
<keyword id="KW-0175">Coiled coil</keyword>
<keyword id="KW-1015">Disulfide bond</keyword>
<keyword id="KW-0272">Extracellular matrix</keyword>
<keyword id="KW-0325">Glycoprotein</keyword>
<keyword id="KW-0424">Laminin EGF-like domain</keyword>
<keyword id="KW-0597">Phosphoprotein</keyword>
<keyword id="KW-1267">Proteomics identification</keyword>
<keyword id="KW-1185">Reference proteome</keyword>
<keyword id="KW-0677">Repeat</keyword>
<keyword id="KW-0964">Secreted</keyword>
<keyword id="KW-0732">Signal</keyword>
<evidence type="ECO:0000255" key="1"/>
<evidence type="ECO:0000255" key="2">
    <source>
        <dbReference type="PROSITE-ProRule" id="PRU00122"/>
    </source>
</evidence>
<evidence type="ECO:0000255" key="3">
    <source>
        <dbReference type="PROSITE-ProRule" id="PRU00458"/>
    </source>
</evidence>
<evidence type="ECO:0000255" key="4">
    <source>
        <dbReference type="PROSITE-ProRule" id="PRU00460"/>
    </source>
</evidence>
<evidence type="ECO:0000255" key="5">
    <source>
        <dbReference type="PROSITE-ProRule" id="PRU00466"/>
    </source>
</evidence>
<evidence type="ECO:0000269" key="6">
    <source>
    </source>
</evidence>
<evidence type="ECO:0000269" key="7">
    <source>
    </source>
</evidence>
<evidence type="ECO:0000269" key="8">
    <source>
    </source>
</evidence>
<evidence type="ECO:0000269" key="9">
    <source>
    </source>
</evidence>
<evidence type="ECO:0000269" key="10">
    <source>
    </source>
</evidence>
<evidence type="ECO:0000305" key="11"/>
<protein>
    <recommendedName>
        <fullName>Laminin subunit alpha-1</fullName>
    </recommendedName>
    <alternativeName>
        <fullName>Laminin A chain</fullName>
    </alternativeName>
    <alternativeName>
        <fullName>Laminin-1 subunit alpha</fullName>
    </alternativeName>
    <alternativeName>
        <fullName>Laminin-3 subunit alpha</fullName>
    </alternativeName>
    <alternativeName>
        <fullName>S-laminin subunit alpha</fullName>
        <shortName>S-LAM alpha</shortName>
    </alternativeName>
</protein>
<sequence>MRGGVLLVLLLCVAAQCRQRGLFPAILNLASNAHISTNATCGEKGPEMFCKLVEHVPGRPVRNPQCRICDGNSANPRERHPISHAIDGTNNWWQSPSIQNGREYHWVTITLDLRQVFQVAYVIIKAANAPRPGNWILERSLDGTTFSPWQYYAVSDSECLSRYNITPRRGPPTYRADDEVICTSYYSRLVPLEHGEIHTSLINGRPSADDLSPKLLEFTSARYIRLRLQRIRTLNADLMTLSHREPKELDPIVTRRYYYSIKDISVGGMCICYGHASSCPWDETTKKLQCQCEHNTCGESCNRCCPGYHQQPWRPGTVSSGNTCEACNCHNKAKDCYYDESVAKQKKSLNTAGQFRGGGVCINCLQNTMGINCETCIDGYYRPHKVSPYEDEPCRPCNCDPVGSLSSVCIKDDLHSDLHNGKQPGQCPCKEGYTGEKCDRCQLGYKDYPTCVSCGCNPVGSASDEPCTGPCVCKENVEGKACDRCKPGFYNLKEKNPRGCSECFCFGVSDVCSSLSWPVGQVNSMSGWLVTDLISPRKIPSQQDALGGRHQVSINNTAVMQRLAPKYYWAAPEAYLGNKLTAFGGFLKYTVSYDIPVETVDSNLMSHADVIIKGNGLTLSTQAEGLSLQPYEEYLNVVRLVPENFQDFHSKRQIDRDQLMTVLANVTHLLIRANYNSAKMALYRLESVSLDIASSNAIDLVVAADVEHCECPQGYTGTSCESCLSGYYRVDGILFGGICQPCECHGHAAECNVHGVCIACAHNTTGVHCEQCLPGFYGEPSRGTPGDCQPCACPLTIASNNFSPTCHLNDGDEVVCDWCAPGYSGAWCERCADGYYGNPTVPGESCVPCDCSGNVDPSEAGHCDSVTGECLKCLGNTDGAHCERCADGFYGDAVTAKNCRACECHVKGSHSAVCHLETGLCDCKPNVTGQQCDQCLHGYYGLDSGHGCRPCNCSVAGSVSDGCTDEGQCHCVPGVAGKRCDRCAHGFYAYQDGSCTPCDCPHTQNTCDPETGECVCPPHTQGVKCEECEDGHWGYDAEVGCQACNCSLVGSTHHRCDVVTGHCQCKSKFGGRACDQCSLGYRDFPDCVPCDCDLRGTSGDACNLEQGLCGCVEETGACPCKENVFGPQCNECREGTFALRADNPLGCSPCFCSGLSHLCSELEDYVRTPVTLGSDQPLLRVVSQSNLRGTTEGVYYQAPDFLLDAATVRQHIRAEPFYWRLPQQFQGDQLMAYGGKLKYSVAFYSLDGVGTSNFEPQVLIKGGRIRKQVIYMDAPAPENGVRQEQEVAMRENFWKYFNSVSEKPVTREDFMSVLSDIEYILIKASYGQGLQQSRISDISMEVGRKAEKLHPEEEVASLLENCVCPPGTVGFSCQDCAPGYHRGKLPAGSDRGPRPLVAPCVPCSCNNHSDTCDPNTGKCLNCGDNTAGDHCDVCTSGYYGKVTGSASDCALCACPHSPPASFSPTCVLEGDHDFRCDACLLGYEGKHCERCSSSYYGNPQTPGGSCQKCDCNPHGSVHGDCDRTSGQCVCRLGASGLRCDECEPRHILMETDCVSCDDECVGVLLNDLDEIGDAVLSLNLTGIIPVPYGILSNLENTTKYLQESLLKENMQKDLGKIKLEGVAEETDNLQKKLTRMLASTQKVNRATERIFKESQDLAIAIERLQMSITEIMEKTTLNQTLDEDFLLPNSTLQNMQQNGTSLLEIMQIRDFTQLHQNATLELKAAEDLLSQIQENYQKPLEELEVLKEAASHVLSKHNNELKAAEALVREAEAKMQESNHLLLMVNANLREFSDKKLHVQEEQNLTSELIVQGRGLIDAAAAQTDAVQDALEHLEDHQDKLLLWSAKIRHHIDDLVMHMSQRNAVDLVYRAEDHAAEFQRLADVLYSGLENIRNVSLNATSAAYVHYNIQSLIEESEELARDAHRTVTETSLLSESLVSNGKAAVQRSSRFLKEGNNLSRKLPGIALELSELRNKTNRFQENAVEITRQTNESLLILRAIPKGIRDKGAKTKELATSASQSAVSTLRDVAGLSQELLNTSASLSRVNTTLRETHQLLQDSTMATLLAGRKVKDVEIQANLLFDRLKPLKMLEENLSRNLSEIKLLISQARKQAASIKVAVSADRDCIRAYQPQISSTNYNTLTLNVKTQEPDNLLFYLGSSTASDFLAVEMRRGRVAFLWDLGSGSTRLEFPDFPIDDNRWHSIHVARFGNIGSLSVKEMSSNQKSPTKTSKSPGTANVLDVNNSTLMFVGGLGGQIKKSPAVKVTHFKGCLGEAFLNGKSIGLWNYIEREGKCRGCFGSSQNEDPSFHFDGSGYSVVEKSLPATVTQIIMLFNTFSPNGLLLYLGSYGTKDFLSIELFRGRVKVMTDLGSGPITLLTDRRYNNGTWYKIAFQRNRKQGVLAVIDAYNTSNKETKQGETPGASSDLNRLDKDPIYVGGLPRSRVVRRGVTTKSFVGCIKNLEISRSTFDLLRNSYGVRKGCLLEPIRSVSFLKGGYIELPPKSLSPESEWLVTFATTNSSGIILAALGGDVEKRGDREEAHVPFFSVMLIGGNIEVHVNPGDGTGLRKALLHAPTGTCSDGQAHSISLVRNRRIITVQLDENNPVEMKLGTLVESRTINVSNLYVGGIPEGEGTSLLTMRRSFHGCIKNLIFNLELLDFNSAVGHEQVDLDTCWLSERPKLAPDAEDSKLLPEPRAFPEQCVVDAALEYVPGAHQFGLTQNSHFILPFNQSAVRKKLSVELSIRTFASSGLIYYMAHQNQADYAVLQLHGGRLHFMFDLGKGRTKVSHPALLSDGKWHTVKTDYVKRKGFITVDGRESPMVTVVGDGTMLDVEGLFYLGGLPSQYQARKIGNITHSIPACIGDVTVNSKQLDKDSPVSAFTVNRCYAVAQEGTYFDGSGYAALVKEGYKVQSDVNITLEFRTSSQNGVLLGISTAKVDAIGLELVDGKVLFHVNNGAGRITAAYEPKTATVLCDGKWHTLQANKSKHRITLIVDGNAVGAESPHTQSTSVDTNNPIYVGGYPAGVKQKCLRSQTSFRGCLRKLALIKSPQVQSFDFSRAFELHGVFLHSCPGTES</sequence>
<accession>P25391</accession>
<organism>
    <name type="scientific">Homo sapiens</name>
    <name type="common">Human</name>
    <dbReference type="NCBI Taxonomy" id="9606"/>
    <lineage>
        <taxon>Eukaryota</taxon>
        <taxon>Metazoa</taxon>
        <taxon>Chordata</taxon>
        <taxon>Craniata</taxon>
        <taxon>Vertebrata</taxon>
        <taxon>Euteleostomi</taxon>
        <taxon>Mammalia</taxon>
        <taxon>Eutheria</taxon>
        <taxon>Euarchontoglires</taxon>
        <taxon>Primates</taxon>
        <taxon>Haplorrhini</taxon>
        <taxon>Catarrhini</taxon>
        <taxon>Hominidae</taxon>
        <taxon>Homo</taxon>
    </lineage>
</organism>
<name>LAMA1_HUMAN</name>
<reference key="1">
    <citation type="journal article" date="1991" name="Matrix">
        <title>Molecular cloning of the cDNA encoding human laminin A chain.</title>
        <authorList>
            <person name="Haaparanta T."/>
            <person name="Uitto J."/>
            <person name="Ruoslahti E."/>
            <person name="Engvall E."/>
        </authorList>
    </citation>
    <scope>NUCLEOTIDE SEQUENCE [MRNA]</scope>
    <scope>VARIANTS THR-674; VAL-1340; THR-1876 AND GLU-2002</scope>
</reference>
<reference key="2">
    <citation type="journal article" date="2005" name="Nature">
        <title>DNA sequence and analysis of human chromosome 18.</title>
        <authorList>
            <person name="Nusbaum C."/>
            <person name="Zody M.C."/>
            <person name="Borowsky M.L."/>
            <person name="Kamal M."/>
            <person name="Kodira C.D."/>
            <person name="Taylor T.D."/>
            <person name="Whittaker C.A."/>
            <person name="Chang J.L."/>
            <person name="Cuomo C.A."/>
            <person name="Dewar K."/>
            <person name="FitzGerald M.G."/>
            <person name="Yang X."/>
            <person name="Abouelleil A."/>
            <person name="Allen N.R."/>
            <person name="Anderson S."/>
            <person name="Bloom T."/>
            <person name="Bugalter B."/>
            <person name="Butler J."/>
            <person name="Cook A."/>
            <person name="DeCaprio D."/>
            <person name="Engels R."/>
            <person name="Garber M."/>
            <person name="Gnirke A."/>
            <person name="Hafez N."/>
            <person name="Hall J.L."/>
            <person name="Norman C.H."/>
            <person name="Itoh T."/>
            <person name="Jaffe D.B."/>
            <person name="Kuroki Y."/>
            <person name="Lehoczky J."/>
            <person name="Lui A."/>
            <person name="Macdonald P."/>
            <person name="Mauceli E."/>
            <person name="Mikkelsen T.S."/>
            <person name="Naylor J.W."/>
            <person name="Nicol R."/>
            <person name="Nguyen C."/>
            <person name="Noguchi H."/>
            <person name="O'Leary S.B."/>
            <person name="Piqani B."/>
            <person name="Smith C.L."/>
            <person name="Talamas J.A."/>
            <person name="Topham K."/>
            <person name="Totoki Y."/>
            <person name="Toyoda A."/>
            <person name="Wain H.M."/>
            <person name="Young S.K."/>
            <person name="Zeng Q."/>
            <person name="Zimmer A.R."/>
            <person name="Fujiyama A."/>
            <person name="Hattori M."/>
            <person name="Birren B.W."/>
            <person name="Sakaki Y."/>
            <person name="Lander E.S."/>
        </authorList>
    </citation>
    <scope>NUCLEOTIDE SEQUENCE [LARGE SCALE GENOMIC DNA]</scope>
</reference>
<reference key="3">
    <citation type="journal article" date="1991" name="Biochem. J.">
        <title>Primary structure of the human laminin A chain. Limited expression in human tissues.</title>
        <authorList>
            <person name="Nissinen M."/>
            <person name="Vuolteenaho R."/>
            <person name="Boot-Handford R."/>
            <person name="Kallunki P."/>
            <person name="Tryggvason K."/>
        </authorList>
    </citation>
    <scope>NUCLEOTIDE SEQUENCE [MRNA] OF 1-2628</scope>
    <scope>VARIANTS THR-674; THR-1876 AND GLU-2002</scope>
</reference>
<reference key="4">
    <citation type="journal article" date="1989" name="Lab. Invest.">
        <title>Human laminin: cloning and sequence analysis of cDNAs encoding A, B1 and B2 chains, and expression of the corresponding genes in human skin and cultured cells.</title>
        <authorList>
            <person name="Olsen D."/>
            <person name="Nagayoshi T."/>
            <person name="Fazio M."/>
            <person name="Peltonen J."/>
            <person name="Jaakkola S."/>
            <person name="Sanborn D."/>
            <person name="Sasaki T."/>
            <person name="Kuivaniemi H."/>
            <person name="Chu M.-L."/>
            <person name="Deutzmann R."/>
            <person name="Timpl R."/>
            <person name="Uitto J."/>
        </authorList>
    </citation>
    <scope>NUCLEOTIDE SEQUENCE [MRNA] OF 2397-3072</scope>
</reference>
<reference key="5">
    <citation type="journal article" date="2009" name="J. Proteome Res.">
        <title>Glycoproteomics analysis of human liver tissue by combination of multiple enzyme digestion and hydrazide chemistry.</title>
        <authorList>
            <person name="Chen R."/>
            <person name="Jiang X."/>
            <person name="Sun D."/>
            <person name="Han G."/>
            <person name="Wang F."/>
            <person name="Ye M."/>
            <person name="Wang L."/>
            <person name="Zou H."/>
        </authorList>
    </citation>
    <scope>GLYCOSYLATION [LARGE SCALE ANALYSIS] AT ASN-2243</scope>
    <source>
        <tissue>Liver</tissue>
    </source>
</reference>
<reference key="6">
    <citation type="journal article" date="2014" name="Am. J. Hum. Genet.">
        <title>Mutations in LAMA1 cause cerebellar dysplasia and cysts with and without retinal dystrophy.</title>
        <authorList>
            <consortium name="University of Washington Center for Mendelian Genomics"/>
            <consortium name="Care4Rare Canada"/>
            <person name="Aldinger K.A."/>
            <person name="Mosca S.J."/>
            <person name="Tetreault M."/>
            <person name="Dempsey J.C."/>
            <person name="Ishak G.E."/>
            <person name="Hartley T."/>
            <person name="Phelps I.G."/>
            <person name="Lamont R.E."/>
            <person name="O'Day D.R."/>
            <person name="Basel D."/>
            <person name="Gripp K.W."/>
            <person name="Baker L."/>
            <person name="Stephan M.J."/>
            <person name="Bernier F.P."/>
            <person name="Boycott K.M."/>
            <person name="Majewski J."/>
            <person name="Parboosingh J.S."/>
            <person name="Innes A.M."/>
            <person name="Doherty D."/>
        </authorList>
    </citation>
    <scope>INVOLVEMENT IN PTBHS</scope>
</reference>
<reference key="7">
    <citation type="journal article" date="2014" name="Cell">
        <title>A secreted tyrosine kinase acts in the extracellular environment.</title>
        <authorList>
            <person name="Bordoli M.R."/>
            <person name="Yum J."/>
            <person name="Breitkopf S.B."/>
            <person name="Thon J.N."/>
            <person name="Italiano J.E. Jr."/>
            <person name="Xiao J."/>
            <person name="Worby C."/>
            <person name="Wong S.K."/>
            <person name="Lin G."/>
            <person name="Edenius M."/>
            <person name="Keller T.L."/>
            <person name="Asara J.M."/>
            <person name="Dixon J.E."/>
            <person name="Yeo C.Y."/>
            <person name="Whitman M."/>
        </authorList>
    </citation>
    <scope>PHOSPHORYLATION</scope>
</reference>
<feature type="signal peptide" evidence="1">
    <location>
        <begin position="1"/>
        <end position="17"/>
    </location>
</feature>
<feature type="chain" id="PRO_0000017054" description="Laminin subunit alpha-1">
    <location>
        <begin position="18"/>
        <end position="3075"/>
    </location>
</feature>
<feature type="domain" description="Laminin N-terminal" evidence="5">
    <location>
        <begin position="18"/>
        <end position="269"/>
    </location>
</feature>
<feature type="domain" description="Laminin EGF-like 1" evidence="4">
    <location>
        <begin position="270"/>
        <end position="326"/>
    </location>
</feature>
<feature type="domain" description="Laminin EGF-like 2" evidence="4">
    <location>
        <begin position="327"/>
        <end position="396"/>
    </location>
</feature>
<feature type="domain" description="Laminin EGF-like 3" evidence="4">
    <location>
        <begin position="397"/>
        <end position="453"/>
    </location>
</feature>
<feature type="domain" description="Laminin EGF-like 4" evidence="4">
    <location>
        <begin position="454"/>
        <end position="502"/>
    </location>
</feature>
<feature type="domain" description="Laminin EGF-like 5; first part" evidence="4">
    <location>
        <begin position="503"/>
        <end position="512"/>
    </location>
</feature>
<feature type="domain" description="Laminin IV type A 1" evidence="3">
    <location>
        <begin position="516"/>
        <end position="708"/>
    </location>
</feature>
<feature type="domain" description="Laminin EGF-like 5; second part" evidence="4">
    <location>
        <begin position="709"/>
        <end position="741"/>
    </location>
</feature>
<feature type="domain" description="Laminin EGF-like 6" evidence="4">
    <location>
        <begin position="742"/>
        <end position="790"/>
    </location>
</feature>
<feature type="domain" description="Laminin EGF-like 7" evidence="4">
    <location>
        <begin position="791"/>
        <end position="848"/>
    </location>
</feature>
<feature type="domain" description="Laminin EGF-like 8" evidence="4">
    <location>
        <begin position="849"/>
        <end position="901"/>
    </location>
</feature>
<feature type="domain" description="Laminin EGF-like 9" evidence="4">
    <location>
        <begin position="902"/>
        <end position="950"/>
    </location>
</feature>
<feature type="domain" description="Laminin EGF-like 10" evidence="4">
    <location>
        <begin position="951"/>
        <end position="997"/>
    </location>
</feature>
<feature type="domain" description="Laminin EGF-like 11" evidence="4">
    <location>
        <begin position="998"/>
        <end position="1043"/>
    </location>
</feature>
<feature type="domain" description="Laminin EGF-like 12" evidence="4">
    <location>
        <begin position="1044"/>
        <end position="1089"/>
    </location>
</feature>
<feature type="domain" description="Laminin EGF-like 13" evidence="4">
    <location>
        <begin position="1090"/>
        <end position="1149"/>
    </location>
</feature>
<feature type="domain" description="Laminin EGF-like 14; first part" evidence="4">
    <location>
        <begin position="1150"/>
        <end position="1159"/>
    </location>
</feature>
<feature type="domain" description="Laminin IV type A 2" evidence="3">
    <location>
        <begin position="1170"/>
        <end position="1361"/>
    </location>
</feature>
<feature type="domain" description="Laminin EGF-like 14; second part" evidence="4">
    <location>
        <begin position="1362"/>
        <end position="1402"/>
    </location>
</feature>
<feature type="domain" description="Laminin EGF-like 15" evidence="4">
    <location>
        <begin position="1403"/>
        <end position="1451"/>
    </location>
</feature>
<feature type="domain" description="Laminin EGF-like 16" evidence="4">
    <location>
        <begin position="1452"/>
        <end position="1508"/>
    </location>
</feature>
<feature type="domain" description="Laminin EGF-like 17" evidence="4">
    <location>
        <begin position="1509"/>
        <end position="1555"/>
    </location>
</feature>
<feature type="domain" description="Laminin G-like 1" evidence="2">
    <location>
        <begin position="2117"/>
        <end position="2297"/>
    </location>
</feature>
<feature type="domain" description="Laminin G-like 2" evidence="2">
    <location>
        <begin position="2305"/>
        <end position="2481"/>
    </location>
</feature>
<feature type="domain" description="Laminin G-like 3" evidence="2">
    <location>
        <begin position="2486"/>
        <end position="2673"/>
    </location>
</feature>
<feature type="domain" description="Laminin G-like 4" evidence="2">
    <location>
        <begin position="2713"/>
        <end position="2885"/>
    </location>
</feature>
<feature type="domain" description="Laminin G-like 5" evidence="2">
    <location>
        <begin position="2890"/>
        <end position="3070"/>
    </location>
</feature>
<feature type="region of interest" description="Domain II and I">
    <location>
        <begin position="1556"/>
        <end position="2116"/>
    </location>
</feature>
<feature type="coiled-coil region" evidence="1">
    <location>
        <begin position="1706"/>
        <end position="1783"/>
    </location>
</feature>
<feature type="short sequence motif" description="Cell attachment site">
    <location>
        <begin position="2534"/>
        <end position="2536"/>
    </location>
</feature>
<feature type="glycosylation site" description="N-linked (GlcNAc...) asparagine" evidence="1">
    <location>
        <position position="665"/>
    </location>
</feature>
<feature type="glycosylation site" description="N-linked (GlcNAc...) asparagine" evidence="1">
    <location>
        <position position="1579"/>
    </location>
</feature>
<feature type="glycosylation site" description="N-linked (GlcNAc...) asparagine" evidence="1">
    <location>
        <position position="1689"/>
    </location>
</feature>
<feature type="glycosylation site" description="N-linked (GlcNAc...) asparagine" evidence="1">
    <location>
        <position position="1717"/>
    </location>
</feature>
<feature type="glycosylation site" description="N-linked (GlcNAc...) asparagine" evidence="1">
    <location>
        <position position="2047"/>
    </location>
</feature>
<feature type="glycosylation site" description="N-linked (GlcNAc...) asparagine" evidence="7">
    <location>
        <position position="2243"/>
    </location>
</feature>
<feature type="disulfide bond" evidence="4">
    <location>
        <begin position="270"/>
        <end position="279"/>
    </location>
</feature>
<feature type="disulfide bond" evidence="4">
    <location>
        <begin position="272"/>
        <end position="290"/>
    </location>
</feature>
<feature type="disulfide bond" evidence="4">
    <location>
        <begin position="292"/>
        <end position="301"/>
    </location>
</feature>
<feature type="disulfide bond" evidence="4">
    <location>
        <begin position="304"/>
        <end position="324"/>
    </location>
</feature>
<feature type="disulfide bond" evidence="4">
    <location>
        <begin position="327"/>
        <end position="336"/>
    </location>
</feature>
<feature type="disulfide bond" evidence="4">
    <location>
        <begin position="329"/>
        <end position="361"/>
    </location>
</feature>
<feature type="disulfide bond" evidence="4">
    <location>
        <begin position="364"/>
        <end position="373"/>
    </location>
</feature>
<feature type="disulfide bond" evidence="4">
    <location>
        <begin position="376"/>
        <end position="394"/>
    </location>
</feature>
<feature type="disulfide bond" evidence="4">
    <location>
        <begin position="397"/>
        <end position="409"/>
    </location>
</feature>
<feature type="disulfide bond" evidence="4">
    <location>
        <begin position="399"/>
        <end position="427"/>
    </location>
</feature>
<feature type="disulfide bond" evidence="4">
    <location>
        <begin position="429"/>
        <end position="438"/>
    </location>
</feature>
<feature type="disulfide bond" evidence="4">
    <location>
        <begin position="441"/>
        <end position="451"/>
    </location>
</feature>
<feature type="disulfide bond" evidence="4">
    <location>
        <begin position="454"/>
        <end position="467"/>
    </location>
</feature>
<feature type="disulfide bond" evidence="4">
    <location>
        <begin position="456"/>
        <end position="471"/>
    </location>
</feature>
<feature type="disulfide bond" evidence="4">
    <location>
        <begin position="473"/>
        <end position="482"/>
    </location>
</feature>
<feature type="disulfide bond" evidence="4">
    <location>
        <begin position="485"/>
        <end position="500"/>
    </location>
</feature>
<feature type="disulfide bond" evidence="4">
    <location>
        <begin position="742"/>
        <end position="751"/>
    </location>
</feature>
<feature type="disulfide bond" evidence="4">
    <location>
        <begin position="744"/>
        <end position="757"/>
    </location>
</feature>
<feature type="disulfide bond" evidence="4">
    <location>
        <begin position="760"/>
        <end position="769"/>
    </location>
</feature>
<feature type="disulfide bond" evidence="4">
    <location>
        <begin position="772"/>
        <end position="788"/>
    </location>
</feature>
<feature type="disulfide bond" evidence="4">
    <location>
        <begin position="791"/>
        <end position="806"/>
    </location>
</feature>
<feature type="disulfide bond" evidence="4">
    <location>
        <begin position="793"/>
        <end position="816"/>
    </location>
</feature>
<feature type="disulfide bond" evidence="4">
    <location>
        <begin position="819"/>
        <end position="828"/>
    </location>
</feature>
<feature type="disulfide bond" evidence="4">
    <location>
        <begin position="831"/>
        <end position="846"/>
    </location>
</feature>
<feature type="disulfide bond" evidence="4">
    <location>
        <begin position="849"/>
        <end position="863"/>
    </location>
</feature>
<feature type="disulfide bond" evidence="4">
    <location>
        <begin position="851"/>
        <end position="870"/>
    </location>
</feature>
<feature type="disulfide bond" evidence="4">
    <location>
        <begin position="873"/>
        <end position="882"/>
    </location>
</feature>
<feature type="disulfide bond" evidence="4">
    <location>
        <begin position="885"/>
        <end position="899"/>
    </location>
</feature>
<feature type="disulfide bond" evidence="4">
    <location>
        <begin position="902"/>
        <end position="914"/>
    </location>
</feature>
<feature type="disulfide bond" evidence="4">
    <location>
        <begin position="904"/>
        <end position="921"/>
    </location>
</feature>
<feature type="disulfide bond" evidence="4">
    <location>
        <begin position="923"/>
        <end position="932"/>
    </location>
</feature>
<feature type="disulfide bond" evidence="4">
    <location>
        <begin position="935"/>
        <end position="948"/>
    </location>
</feature>
<feature type="disulfide bond" evidence="4">
    <location>
        <begin position="951"/>
        <end position="963"/>
    </location>
</feature>
<feature type="disulfide bond" evidence="4">
    <location>
        <begin position="953"/>
        <end position="969"/>
    </location>
</feature>
<feature type="disulfide bond" evidence="4">
    <location>
        <begin position="971"/>
        <end position="980"/>
    </location>
</feature>
<feature type="disulfide bond" evidence="4">
    <location>
        <begin position="983"/>
        <end position="995"/>
    </location>
</feature>
<feature type="disulfide bond" evidence="4">
    <location>
        <begin position="998"/>
        <end position="1007"/>
    </location>
</feature>
<feature type="disulfide bond" evidence="4">
    <location>
        <begin position="1000"/>
        <end position="1014"/>
    </location>
</feature>
<feature type="disulfide bond" evidence="4">
    <location>
        <begin position="1016"/>
        <end position="1025"/>
    </location>
</feature>
<feature type="disulfide bond" evidence="4">
    <location>
        <begin position="1028"/>
        <end position="1041"/>
    </location>
</feature>
<feature type="disulfide bond" evidence="4">
    <location>
        <begin position="1044"/>
        <end position="1056"/>
    </location>
</feature>
<feature type="disulfide bond" evidence="4">
    <location>
        <begin position="1046"/>
        <end position="1063"/>
    </location>
</feature>
<feature type="disulfide bond" evidence="4">
    <location>
        <begin position="1065"/>
        <end position="1074"/>
    </location>
</feature>
<feature type="disulfide bond" evidence="4">
    <location>
        <begin position="1077"/>
        <end position="1087"/>
    </location>
</feature>
<feature type="disulfide bond" evidence="4">
    <location>
        <begin position="1090"/>
        <end position="1102"/>
    </location>
</feature>
<feature type="disulfide bond" evidence="4">
    <location>
        <begin position="1092"/>
        <end position="1118"/>
    </location>
</feature>
<feature type="disulfide bond" evidence="4">
    <location>
        <begin position="1120"/>
        <end position="1129"/>
    </location>
</feature>
<feature type="disulfide bond" evidence="4">
    <location>
        <begin position="1132"/>
        <end position="1147"/>
    </location>
</feature>
<feature type="disulfide bond" evidence="4">
    <location>
        <begin position="1403"/>
        <end position="1412"/>
    </location>
</feature>
<feature type="disulfide bond" evidence="4">
    <location>
        <begin position="1405"/>
        <end position="1419"/>
    </location>
</feature>
<feature type="disulfide bond" evidence="4">
    <location>
        <begin position="1422"/>
        <end position="1431"/>
    </location>
</feature>
<feature type="disulfide bond" evidence="4">
    <location>
        <begin position="1434"/>
        <end position="1449"/>
    </location>
</feature>
<feature type="disulfide bond" evidence="4">
    <location>
        <begin position="1452"/>
        <end position="1466"/>
    </location>
</feature>
<feature type="disulfide bond" evidence="4">
    <location>
        <begin position="1454"/>
        <end position="1476"/>
    </location>
</feature>
<feature type="disulfide bond" evidence="4">
    <location>
        <begin position="1479"/>
        <end position="1488"/>
    </location>
</feature>
<feature type="disulfide bond" evidence="4">
    <location>
        <begin position="1491"/>
        <end position="1506"/>
    </location>
</feature>
<feature type="disulfide bond" evidence="4">
    <location>
        <begin position="1509"/>
        <end position="1521"/>
    </location>
</feature>
<feature type="disulfide bond" evidence="4">
    <location>
        <begin position="1511"/>
        <end position="1528"/>
    </location>
</feature>
<feature type="disulfide bond" evidence="4">
    <location>
        <begin position="1530"/>
        <end position="1539"/>
    </location>
</feature>
<feature type="disulfide bond" evidence="4">
    <location>
        <begin position="1542"/>
        <end position="1553"/>
    </location>
</feature>
<feature type="disulfide bond" description="Interchain" evidence="11">
    <location>
        <position position="1556"/>
    </location>
</feature>
<feature type="disulfide bond" description="Interchain" evidence="11">
    <location>
        <position position="1560"/>
    </location>
</feature>
<feature type="disulfide bond" evidence="2">
    <location>
        <begin position="2271"/>
        <end position="2297"/>
    </location>
</feature>
<feature type="disulfide bond" evidence="2">
    <location>
        <begin position="2457"/>
        <end position="2481"/>
    </location>
</feature>
<feature type="disulfide bond" evidence="2">
    <location>
        <begin position="2646"/>
        <end position="2673"/>
    </location>
</feature>
<feature type="disulfide bond" evidence="2">
    <location>
        <begin position="2860"/>
        <end position="2885"/>
    </location>
</feature>
<feature type="disulfide bond" evidence="2">
    <location>
        <begin position="3039"/>
        <end position="3070"/>
    </location>
</feature>
<feature type="sequence variant" id="VAR_056132" description="In dbSNP:rs9950267.">
    <original>L</original>
    <variation>S</variation>
    <location>
        <position position="349"/>
    </location>
</feature>
<feature type="sequence variant" id="VAR_056133" description="In dbSNP:rs16951079.">
    <original>V</original>
    <variation>I</variation>
    <location>
        <position position="559"/>
    </location>
</feature>
<feature type="sequence variant" id="VAR_060785" description="In dbSNP:rs566655." evidence="6 8">
    <original>N</original>
    <variation>T</variation>
    <location>
        <position position="674"/>
    </location>
</feature>
<feature type="sequence variant" id="VAR_060786" description="In dbSNP:rs662471." evidence="6">
    <original>M</original>
    <variation>V</variation>
    <location>
        <position position="1340"/>
    </location>
</feature>
<feature type="sequence variant" id="VAR_056134" description="In dbSNP:rs12961939.">
    <original>S</original>
    <variation>A</variation>
    <location>
        <position position="1577"/>
    </location>
</feature>
<feature type="sequence variant" id="VAR_056135" description="In dbSNP:rs596315.">
    <original>L</original>
    <variation>V</variation>
    <location>
        <position position="1591"/>
    </location>
</feature>
<feature type="sequence variant" id="VAR_056136" description="In dbSNP:rs11872364.">
    <original>K</original>
    <variation>E</variation>
    <location>
        <position position="1632"/>
    </location>
</feature>
<feature type="sequence variant" id="VAR_056137" description="In dbSNP:rs16950981.">
    <original>D</original>
    <variation>V</variation>
    <location>
        <position position="1682"/>
    </location>
</feature>
<feature type="sequence variant" id="VAR_060787" description="In dbSNP:rs11664063." evidence="6 8">
    <original>A</original>
    <variation>T</variation>
    <location>
        <position position="1876"/>
    </location>
</feature>
<feature type="sequence variant" id="VAR_060788" description="In dbSNP:rs607230." evidence="6 8">
    <original>K</original>
    <variation>E</variation>
    <location>
        <position position="2002"/>
    </location>
</feature>
<feature type="sequence variant" id="VAR_056138" description="In dbSNP:rs671871.">
    <original>I</original>
    <variation>T</variation>
    <location>
        <position position="2076"/>
    </location>
</feature>
<feature type="sequence variant" id="VAR_061347" description="In dbSNP:rs60009920.">
    <original>L</original>
    <variation>M</variation>
    <location>
        <position position="2511"/>
    </location>
</feature>
<feature type="sequence variant" id="VAR_056139" description="In dbSNP:rs543355.">
    <original>T</original>
    <variation>A</variation>
    <location>
        <position position="2611"/>
    </location>
</feature>
<feature type="sequence conflict" description="In Ref. 3; CAA41418." evidence="11" ref="3">
    <original>LQ</original>
    <variation>FE</variation>
    <location>
        <begin position="228"/>
        <end position="229"/>
    </location>
</feature>
<feature type="sequence conflict" description="In Ref. 3; CAA41418." evidence="11" ref="3">
    <original>IVT</original>
    <variation>MLP</variation>
    <location>
        <begin position="252"/>
        <end position="254"/>
    </location>
</feature>
<feature type="sequence conflict" description="In Ref. 3; CAA41418." evidence="11" ref="3">
    <original>H</original>
    <variation>E</variation>
    <location>
        <position position="419"/>
    </location>
</feature>
<feature type="sequence conflict" description="In Ref. 3; CAA41418." evidence="11" ref="3">
    <original>V</original>
    <variation>L</variation>
    <location>
        <position position="519"/>
    </location>
</feature>
<feature type="sequence conflict" description="In Ref. 1; no nucleotide entry." evidence="11" ref="1">
    <original>V</original>
    <variation>G</variation>
    <location>
        <position position="1023"/>
    </location>
</feature>
<feature type="sequence conflict" description="In Ref. 3; CAA41418." evidence="11" ref="3">
    <original>D</original>
    <variation>V</variation>
    <location>
        <position position="1075"/>
    </location>
</feature>
<feature type="sequence conflict" description="In Ref. 1; no nucleotide entry." evidence="11" ref="1">
    <original>P</original>
    <variation>R</variation>
    <location>
        <position position="1513"/>
    </location>
</feature>
<feature type="sequence conflict" description="In Ref. 1; no nucleotide entry and 3; CAA41418." evidence="11" ref="1 3">
    <original>I</original>
    <variation>V</variation>
    <location>
        <position position="1659"/>
    </location>
</feature>
<feature type="sequence conflict" description="In Ref. 3; CAA41418." evidence="11" ref="3">
    <original>NL</original>
    <variation>KV</variation>
    <location>
        <begin position="2079"/>
        <end position="2080"/>
    </location>
</feature>
<feature type="sequence conflict" description="In Ref. 1; no nucleotide entry and 4; no nucleotide entry." evidence="11" ref="1 4">
    <original>P</original>
    <variation>R</variation>
    <location>
        <position position="2692"/>
    </location>
</feature>
<feature type="sequence conflict" description="In Ref. 4; no nucleotide entry." evidence="11" ref="4">
    <original>F</original>
    <variation>L</variation>
    <location>
        <position position="2746"/>
    </location>
</feature>
<feature type="sequence conflict" description="In Ref. 1; no nucleotide entry and 4; no nucleotide entry." evidence="11" ref="1 4">
    <original>A</original>
    <variation>P</variation>
    <location>
        <position position="2962"/>
    </location>
</feature>
<feature type="sequence conflict" description="In Ref. 4; no nucleotide entry." evidence="11" ref="4">
    <original>F</original>
    <variation>L</variation>
    <location>
        <position position="3054"/>
    </location>
</feature>
<proteinExistence type="evidence at protein level"/>
<comment type="function">
    <text>Binding to cells via a high affinity receptor, laminin is thought to mediate the attachment, migration and organization of cells into tissues during embryonic development by interacting with other extracellular matrix components.</text>
</comment>
<comment type="subunit">
    <text>Laminin is a complex glycoprotein, consisting of three different polypeptide chains (alpha, beta, gamma), which are bound to each other by disulfide bonds into a cross-shaped molecule comprising one long and three short arms with globules at each end. Alpha-1 is a subunit of laminin-1 (laminin-111 or EHS laminin) and laminin-3 (laminin-121 or S-laminin).</text>
</comment>
<comment type="interaction">
    <interactant intactId="EBI-2529668">
        <id>P25391</id>
    </interactant>
    <interactant intactId="EBI-7167339">
        <id>Q8BDF8</id>
        <label>p4c</label>
    </interactant>
    <organismsDiffer>true</organismsDiffer>
    <experiments>2</experiments>
</comment>
<comment type="subcellular location">
    <subcellularLocation>
        <location>Secreted</location>
        <location>Extracellular space</location>
        <location>Extracellular matrix</location>
        <location>Basement membrane</location>
    </subcellularLocation>
    <text>Major component.</text>
</comment>
<comment type="domain">
    <text>The alpha-helical domains I and II are thought to interact with other laminin chains to form a coiled coil structure.</text>
</comment>
<comment type="domain">
    <text>Domains VI, IV and G are globular.</text>
</comment>
<comment type="PTM">
    <text evidence="10">Tyrosine phosphorylated by PKDCC/VLK.</text>
</comment>
<comment type="disease" evidence="9">
    <disease id="DI-04197">
        <name>Poretti-Boltshauser syndrome</name>
        <acronym>PTBHS</acronym>
        <description>An autosomal recessive disorder characterized by cerebellar dysplasia, cerebellar vermis atrophy, cerebellar cysts in most patients, high myopia, variable retinal dystrophy, and eye movement abnormalities including strabismus, ocular apraxia, nystagmus. Affected individuals have ataxia, delayed motor development, language impairment, and intellectual disability with variable severity.</description>
        <dbReference type="MIM" id="615960"/>
    </disease>
    <text>The disease is caused by variants affecting the gene represented in this entry.</text>
</comment>
<gene>
    <name type="primary">LAMA1</name>
    <name type="synonym">LAMA</name>
</gene>